<gene>
    <name evidence="7" type="primary">txt-8</name>
    <name evidence="7" type="ORF">ZK262.3</name>
</gene>
<keyword id="KW-1015">Disulfide bond</keyword>
<keyword id="KW-0325">Glycoprotein</keyword>
<keyword id="KW-0378">Hydrolase</keyword>
<keyword id="KW-0442">Lipid degradation</keyword>
<keyword id="KW-0443">Lipid metabolism</keyword>
<keyword id="KW-1185">Reference proteome</keyword>
<keyword id="KW-0964">Secreted</keyword>
<keyword id="KW-0732">Signal</keyword>
<sequence>MPKNLRFSVFLLFLLCINSVFGEFGPEDAQYNETEARMLLSLSAAAYSLDVTPCIGRTFSPAENQTLLSTFSVRCDFVGNPCAGYIVVSDVLQQITVVFRGTKTSSQLLLEGWTTLKPSSDFYGMGLVNTYFRSGHEKTWQYVQDALSISQYRNYDVYVTGHSLGGALAGLCAPRIVHDGLRQSQKIKVVTFGEPRVGNIEFSRAYDQLVPYSFRVVHSGDVVPHLPGCVKDLSYTPPAGSDGSMPCDPVSTNGGYHHAIEIWYPGNMTQGDPFMVCTGLPRDEDFGCSDSLKVNLGDTNQGVWDHRNYFGVEVPDFGKGGCDPSMTFKGPPTKTGVLSLVGSVFGRKRRSIR</sequence>
<accession>Q9XTR8</accession>
<reference key="1">
    <citation type="journal article" date="1998" name="Science">
        <title>Genome sequence of the nematode C. elegans: a platform for investigating biology.</title>
        <authorList>
            <consortium name="The C. elegans sequencing consortium"/>
        </authorList>
    </citation>
    <scope>NUCLEOTIDE SEQUENCE [LARGE SCALE GENOMIC DNA]</scope>
    <source>
        <strain>Bristol N2</strain>
    </source>
</reference>
<reference key="2">
    <citation type="journal article" date="2003" name="Nat. Biotechnol.">
        <title>Lectin affinity capture, isotope-coded tagging and mass spectrometry to identify N-linked glycoproteins.</title>
        <authorList>
            <person name="Kaji H."/>
            <person name="Saito H."/>
            <person name="Yamauchi Y."/>
            <person name="Shinkawa T."/>
            <person name="Taoka M."/>
            <person name="Hirabayashi J."/>
            <person name="Kasai K."/>
            <person name="Takahashi N."/>
            <person name="Isobe T."/>
        </authorList>
    </citation>
    <scope>GLYCOSYLATION [LARGE SCALE ANALYSIS] AT ASN-64</scope>
    <scope>IDENTIFICATION BY MASS SPECTROMETRY</scope>
    <source>
        <strain>Bristol N2</strain>
    </source>
</reference>
<reference key="3">
    <citation type="journal article" date="2007" name="Mol. Cell. Proteomics">
        <title>Proteomics reveals N-linked glycoprotein diversity in Caenorhabditis elegans and suggests an atypical translocation mechanism for integral membrane proteins.</title>
        <authorList>
            <person name="Kaji H."/>
            <person name="Kamiie J."/>
            <person name="Kawakami H."/>
            <person name="Kido K."/>
            <person name="Yamauchi Y."/>
            <person name="Shinkawa T."/>
            <person name="Taoka M."/>
            <person name="Takahashi N."/>
            <person name="Isobe T."/>
        </authorList>
    </citation>
    <scope>GLYCOSYLATION [LARGE SCALE ANALYSIS] AT ASN-64</scope>
    <scope>IDENTIFICATION BY MASS SPECTROMETRY</scope>
    <source>
        <strain>Bristol N2</strain>
    </source>
</reference>
<feature type="signal peptide" evidence="2">
    <location>
        <begin position="1"/>
        <end position="22"/>
    </location>
</feature>
<feature type="chain" id="PRO_0000248513" description="Lipase ZK262.3">
    <location>
        <begin position="23"/>
        <end position="353"/>
    </location>
</feature>
<feature type="active site" description="Nucleophile" evidence="1">
    <location>
        <position position="163"/>
    </location>
</feature>
<feature type="active site" description="Charge relay system" evidence="3">
    <location>
        <position position="221"/>
    </location>
</feature>
<feature type="active site" description="Charge relay system" evidence="3">
    <location>
        <position position="306"/>
    </location>
</feature>
<feature type="glycosylation site" description="N-linked (GlcNAc...) asparagine" evidence="2">
    <location>
        <position position="32"/>
    </location>
</feature>
<feature type="glycosylation site" description="N-linked (GlcNAc...) asparagine" evidence="4 5">
    <location>
        <position position="64"/>
    </location>
</feature>
<feature type="glycosylation site" description="N-linked (GlcNAc...) asparagine" evidence="2">
    <location>
        <position position="267"/>
    </location>
</feature>
<feature type="disulfide bond" evidence="1">
    <location>
        <begin position="277"/>
        <end position="288"/>
    </location>
</feature>
<protein>
    <recommendedName>
        <fullName>Lipase ZK262.3</fullName>
        <ecNumber>3.1.1.-</ecNumber>
    </recommendedName>
</protein>
<dbReference type="EC" id="3.1.1.-"/>
<dbReference type="EMBL" id="Z99288">
    <property type="protein sequence ID" value="CAB16546.1"/>
    <property type="molecule type" value="Genomic_DNA"/>
</dbReference>
<dbReference type="PIR" id="T27799">
    <property type="entry name" value="T27799"/>
</dbReference>
<dbReference type="RefSeq" id="NP_507603.1">
    <property type="nucleotide sequence ID" value="NM_075202.1"/>
</dbReference>
<dbReference type="SMR" id="Q9XTR8"/>
<dbReference type="FunCoup" id="Q9XTR8">
    <property type="interactions" value="33"/>
</dbReference>
<dbReference type="ESTHER" id="caeel-ZK262.3">
    <property type="family name" value="Lipase_3"/>
</dbReference>
<dbReference type="iPTMnet" id="Q9XTR8"/>
<dbReference type="PaxDb" id="6239-ZK262.3"/>
<dbReference type="PeptideAtlas" id="Q9XTR8"/>
<dbReference type="EnsemblMetazoa" id="ZK262.3.1">
    <property type="protein sequence ID" value="ZK262.3.1"/>
    <property type="gene ID" value="WBGene00013950"/>
</dbReference>
<dbReference type="UCSC" id="ZK262.3">
    <property type="organism name" value="c. elegans"/>
</dbReference>
<dbReference type="AGR" id="WB:WBGene00013950"/>
<dbReference type="WormBase" id="ZK262.3">
    <property type="protein sequence ID" value="CE19323"/>
    <property type="gene ID" value="WBGene00013950"/>
    <property type="gene designation" value="txt-8"/>
</dbReference>
<dbReference type="eggNOG" id="KOG4569">
    <property type="taxonomic scope" value="Eukaryota"/>
</dbReference>
<dbReference type="GeneTree" id="ENSGT00940000174480"/>
<dbReference type="HOGENOM" id="CLU_032957_0_1_1"/>
<dbReference type="InParanoid" id="Q9XTR8"/>
<dbReference type="OMA" id="WYPGNMT"/>
<dbReference type="OrthoDB" id="438440at2759"/>
<dbReference type="PhylomeDB" id="Q9XTR8"/>
<dbReference type="PRO" id="PR:Q9XTR8"/>
<dbReference type="Proteomes" id="UP000001940">
    <property type="component" value="Chromosome V"/>
</dbReference>
<dbReference type="Bgee" id="WBGene00013950">
    <property type="expression patterns" value="Expressed in pharyngeal muscle cell (C elegans) and 3 other cell types or tissues"/>
</dbReference>
<dbReference type="GO" id="GO:0005576">
    <property type="term" value="C:extracellular region"/>
    <property type="evidence" value="ECO:0007669"/>
    <property type="project" value="UniProtKB-SubCell"/>
</dbReference>
<dbReference type="GO" id="GO:0016787">
    <property type="term" value="F:hydrolase activity"/>
    <property type="evidence" value="ECO:0007669"/>
    <property type="project" value="UniProtKB-KW"/>
</dbReference>
<dbReference type="GO" id="GO:0016042">
    <property type="term" value="P:lipid catabolic process"/>
    <property type="evidence" value="ECO:0007669"/>
    <property type="project" value="UniProtKB-KW"/>
</dbReference>
<dbReference type="CDD" id="cd00519">
    <property type="entry name" value="Lipase_3"/>
    <property type="match status" value="1"/>
</dbReference>
<dbReference type="Gene3D" id="3.40.50.1820">
    <property type="entry name" value="alpha/beta hydrolase"/>
    <property type="match status" value="1"/>
</dbReference>
<dbReference type="InterPro" id="IPR029058">
    <property type="entry name" value="AB_hydrolase_fold"/>
</dbReference>
<dbReference type="InterPro" id="IPR002921">
    <property type="entry name" value="Fungal_lipase-type"/>
</dbReference>
<dbReference type="PANTHER" id="PTHR45908:SF1">
    <property type="entry name" value="FUNGAL LIPASE-LIKE DOMAIN-CONTAINING PROTEIN-RELATED"/>
    <property type="match status" value="1"/>
</dbReference>
<dbReference type="PANTHER" id="PTHR45908">
    <property type="entry name" value="PROTEIN CBG11750-RELATED"/>
    <property type="match status" value="1"/>
</dbReference>
<dbReference type="Pfam" id="PF01764">
    <property type="entry name" value="Lipase_3"/>
    <property type="match status" value="1"/>
</dbReference>
<dbReference type="SUPFAM" id="SSF53474">
    <property type="entry name" value="alpha/beta-Hydrolases"/>
    <property type="match status" value="1"/>
</dbReference>
<dbReference type="PROSITE" id="PS00120">
    <property type="entry name" value="LIPASE_SER"/>
    <property type="match status" value="1"/>
</dbReference>
<evidence type="ECO:0000250" key="1"/>
<evidence type="ECO:0000255" key="2"/>
<evidence type="ECO:0000255" key="3">
    <source>
        <dbReference type="PROSITE-ProRule" id="PRU10037"/>
    </source>
</evidence>
<evidence type="ECO:0000269" key="4">
    <source>
    </source>
</evidence>
<evidence type="ECO:0000269" key="5">
    <source>
    </source>
</evidence>
<evidence type="ECO:0000305" key="6"/>
<evidence type="ECO:0000312" key="7">
    <source>
        <dbReference type="WormBase" id="ZK262.3"/>
    </source>
</evidence>
<organism>
    <name type="scientific">Caenorhabditis elegans</name>
    <dbReference type="NCBI Taxonomy" id="6239"/>
    <lineage>
        <taxon>Eukaryota</taxon>
        <taxon>Metazoa</taxon>
        <taxon>Ecdysozoa</taxon>
        <taxon>Nematoda</taxon>
        <taxon>Chromadorea</taxon>
        <taxon>Rhabditida</taxon>
        <taxon>Rhabditina</taxon>
        <taxon>Rhabditomorpha</taxon>
        <taxon>Rhabditoidea</taxon>
        <taxon>Rhabditidae</taxon>
        <taxon>Peloderinae</taxon>
        <taxon>Caenorhabditis</taxon>
    </lineage>
</organism>
<proteinExistence type="evidence at protein level"/>
<name>LIP1_CAEEL</name>
<comment type="function">
    <text evidence="1">Probable lipase.</text>
</comment>
<comment type="subcellular location">
    <subcellularLocation>
        <location evidence="6">Secreted</location>
    </subcellularLocation>
</comment>
<comment type="similarity">
    <text evidence="6">Belongs to the AB hydrolase superfamily. Lipase family.</text>
</comment>